<protein>
    <recommendedName>
        <fullName evidence="1">Nuclear export protein</fullName>
        <shortName evidence="1">NEP</shortName>
    </recommendedName>
    <alternativeName>
        <fullName evidence="1">Non-structural protein 2</fullName>
        <shortName evidence="1">NS2</shortName>
    </alternativeName>
</protein>
<comment type="function">
    <text evidence="1">Mediates the nuclear export of encapsidated genomic RNAs (ribonucleoproteins, RNPs). Acts as an adapter between viral RNPs complexes and the nuclear export machinery of the cell. Possesses no intrinsic RNA-binding activity, but includes a C-terminal M1-binding domain. This domain is believed to allow recognition of RNPs bound to the protein M1. Since protein M1 is not available in large quantities before late stages of infection, such an indirect recognition mechanism probably ensures that genomic RNPs are not exported from the host nucleus until sufficient quantities of viral mRNA and progeny genomic RNA have been synthesized. Furthermore, the RNPs enter the host cytoplasm only when associated with the M1 protein that is necessary to guide them to the plasma membrane. May down-regulate viral RNA synthesis when overproduced.</text>
</comment>
<comment type="subunit">
    <text evidence="1">Interacts with protein M1. May interact with host nucleoporin RAB/HRB and exportin XPO1/CRM1.</text>
</comment>
<comment type="subcellular location">
    <subcellularLocation>
        <location evidence="1">Virion</location>
    </subcellularLocation>
    <subcellularLocation>
        <location evidence="1">Host nucleus</location>
    </subcellularLocation>
</comment>
<comment type="alternative products">
    <event type="alternative splicing"/>
    <isoform>
        <id>P03511-1</id>
        <name>NEP</name>
        <name>NS2</name>
        <sequence type="displayed"/>
    </isoform>
    <isoform>
        <id>P03502-1</id>
        <name>NS1</name>
        <sequence type="external"/>
    </isoform>
</comment>
<comment type="similarity">
    <text evidence="1">Belongs to the influenza viruses NEP family.</text>
</comment>
<sequence length="122" mass="14238">MADNMTTTQIEWRMKKMAIGSSTHSSSVLMKDIQSQFEQLKLRWESYPNLVKSTDYHQKRETIRLATEELYLLSKRIDDSILFHKTVIANSSIIADMIVSLSLLETLYEMKDVVEVYSRQCL</sequence>
<organismHost>
    <name type="scientific">Homo sapiens</name>
    <name type="common">Human</name>
    <dbReference type="NCBI Taxonomy" id="9606"/>
</organismHost>
<evidence type="ECO:0000255" key="1">
    <source>
        <dbReference type="HAMAP-Rule" id="MF_04067"/>
    </source>
</evidence>
<reference key="1">
    <citation type="journal article" date="1982" name="J. Virol.">
        <title>Influenza B virus genome: sequences and structural organization of RNA segment 8 and the mRNAs coding for the NS1 and NS2 proteins.</title>
        <authorList>
            <person name="Briedis D.J."/>
            <person name="Lamb R.A."/>
        </authorList>
    </citation>
    <scope>NUCLEOTIDE SEQUENCE [GENOMIC RNA]</scope>
</reference>
<reference key="2">
    <citation type="journal article" date="2001" name="J. Virol.">
        <title>Influenza B and C virus NEP (NS2) proteins possess nuclear export activities.</title>
        <authorList>
            <person name="Paragas J."/>
            <person name="Talon J."/>
            <person name="O'Neill R.E."/>
            <person name="Anderson D.K."/>
            <person name="Garcia-Sastre A."/>
            <person name="Palese P."/>
        </authorList>
    </citation>
    <scope>INTERACTION WITH HUMAN XPO1</scope>
</reference>
<gene>
    <name evidence="1" type="primary">NS</name>
</gene>
<feature type="chain" id="PRO_0000079015" description="Nuclear export protein">
    <location>
        <begin position="1"/>
        <end position="122"/>
    </location>
</feature>
<feature type="short sequence motif" description="Nuclear export signal" evidence="1">
    <location>
        <begin position="10"/>
        <end position="19"/>
    </location>
</feature>
<feature type="short sequence motif" description="Nuclear export signal" evidence="1">
    <location>
        <begin position="86"/>
        <end position="95"/>
    </location>
</feature>
<name>NEP_INBLE</name>
<dbReference type="EMBL" id="J02096">
    <property type="protein sequence ID" value="AAA43755.1"/>
    <property type="molecule type" value="Genomic_RNA"/>
</dbReference>
<dbReference type="PIR" id="A04099">
    <property type="entry name" value="MNIVB"/>
</dbReference>
<dbReference type="RefSeq" id="NP_056665.1">
    <molecule id="P03511-1"/>
    <property type="nucleotide sequence ID" value="NC_002211.1"/>
</dbReference>
<dbReference type="KEGG" id="vg:26824007"/>
<dbReference type="Proteomes" id="UP000008158">
    <property type="component" value="Genome"/>
</dbReference>
<dbReference type="GO" id="GO:0042025">
    <property type="term" value="C:host cell nucleus"/>
    <property type="evidence" value="ECO:0007669"/>
    <property type="project" value="UniProtKB-SubCell"/>
</dbReference>
<dbReference type="GO" id="GO:0044423">
    <property type="term" value="C:virion component"/>
    <property type="evidence" value="ECO:0007669"/>
    <property type="project" value="UniProtKB-UniRule"/>
</dbReference>
<dbReference type="GO" id="GO:0039675">
    <property type="term" value="P:exit of virus from host cell nucleus through nuclear pore"/>
    <property type="evidence" value="ECO:0007669"/>
    <property type="project" value="UniProtKB-UniRule"/>
</dbReference>
<dbReference type="HAMAP" id="MF_04067">
    <property type="entry name" value="INFV_NEP"/>
    <property type="match status" value="1"/>
</dbReference>
<dbReference type="InterPro" id="IPR000968">
    <property type="entry name" value="Flu_NS2"/>
</dbReference>
<dbReference type="Pfam" id="PF00601">
    <property type="entry name" value="Flu_NS2"/>
    <property type="match status" value="1"/>
</dbReference>
<proteinExistence type="evidence at protein level"/>
<accession>P03511</accession>
<keyword id="KW-0025">Alternative splicing</keyword>
<keyword id="KW-1048">Host nucleus</keyword>
<keyword id="KW-0945">Host-virus interaction</keyword>
<keyword id="KW-1185">Reference proteome</keyword>
<keyword id="KW-0813">Transport</keyword>
<keyword id="KW-0946">Virion</keyword>
<organism>
    <name type="scientific">Influenza B virus (strain B/Lee/1940)</name>
    <dbReference type="NCBI Taxonomy" id="518987"/>
    <lineage>
        <taxon>Viruses</taxon>
        <taxon>Riboviria</taxon>
        <taxon>Orthornavirae</taxon>
        <taxon>Negarnaviricota</taxon>
        <taxon>Polyploviricotina</taxon>
        <taxon>Insthoviricetes</taxon>
        <taxon>Articulavirales</taxon>
        <taxon>Orthomyxoviridae</taxon>
        <taxon>Betainfluenzavirus</taxon>
        <taxon>Betainfluenzavirus influenzae</taxon>
        <taxon>Influenza B virus</taxon>
    </lineage>
</organism>